<dbReference type="EC" id="4.2.3.4" evidence="1"/>
<dbReference type="EMBL" id="CP000644">
    <property type="protein sequence ID" value="ABO89247.1"/>
    <property type="molecule type" value="Genomic_DNA"/>
</dbReference>
<dbReference type="RefSeq" id="WP_011898456.1">
    <property type="nucleotide sequence ID" value="NC_009348.1"/>
</dbReference>
<dbReference type="SMR" id="A4SK25"/>
<dbReference type="STRING" id="29491.GCA_000820065_02100"/>
<dbReference type="KEGG" id="asa:ASA_1126"/>
<dbReference type="eggNOG" id="COG0337">
    <property type="taxonomic scope" value="Bacteria"/>
</dbReference>
<dbReference type="HOGENOM" id="CLU_001201_0_2_6"/>
<dbReference type="UniPathway" id="UPA00053">
    <property type="reaction ID" value="UER00085"/>
</dbReference>
<dbReference type="Proteomes" id="UP000000225">
    <property type="component" value="Chromosome"/>
</dbReference>
<dbReference type="GO" id="GO:0005737">
    <property type="term" value="C:cytoplasm"/>
    <property type="evidence" value="ECO:0007669"/>
    <property type="project" value="UniProtKB-SubCell"/>
</dbReference>
<dbReference type="GO" id="GO:0003856">
    <property type="term" value="F:3-dehydroquinate synthase activity"/>
    <property type="evidence" value="ECO:0007669"/>
    <property type="project" value="UniProtKB-UniRule"/>
</dbReference>
<dbReference type="GO" id="GO:0046872">
    <property type="term" value="F:metal ion binding"/>
    <property type="evidence" value="ECO:0007669"/>
    <property type="project" value="UniProtKB-KW"/>
</dbReference>
<dbReference type="GO" id="GO:0000166">
    <property type="term" value="F:nucleotide binding"/>
    <property type="evidence" value="ECO:0007669"/>
    <property type="project" value="UniProtKB-KW"/>
</dbReference>
<dbReference type="GO" id="GO:0008652">
    <property type="term" value="P:amino acid biosynthetic process"/>
    <property type="evidence" value="ECO:0007669"/>
    <property type="project" value="UniProtKB-KW"/>
</dbReference>
<dbReference type="GO" id="GO:0009073">
    <property type="term" value="P:aromatic amino acid family biosynthetic process"/>
    <property type="evidence" value="ECO:0007669"/>
    <property type="project" value="UniProtKB-KW"/>
</dbReference>
<dbReference type="GO" id="GO:0009423">
    <property type="term" value="P:chorismate biosynthetic process"/>
    <property type="evidence" value="ECO:0007669"/>
    <property type="project" value="UniProtKB-UniRule"/>
</dbReference>
<dbReference type="CDD" id="cd08195">
    <property type="entry name" value="DHQS"/>
    <property type="match status" value="1"/>
</dbReference>
<dbReference type="FunFam" id="1.20.1090.10:FF:000002">
    <property type="entry name" value="3-dehydroquinate synthase"/>
    <property type="match status" value="1"/>
</dbReference>
<dbReference type="FunFam" id="3.40.50.1970:FF:000001">
    <property type="entry name" value="3-dehydroquinate synthase"/>
    <property type="match status" value="1"/>
</dbReference>
<dbReference type="Gene3D" id="3.40.50.1970">
    <property type="match status" value="1"/>
</dbReference>
<dbReference type="Gene3D" id="1.20.1090.10">
    <property type="entry name" value="Dehydroquinate synthase-like - alpha domain"/>
    <property type="match status" value="1"/>
</dbReference>
<dbReference type="HAMAP" id="MF_00110">
    <property type="entry name" value="DHQ_synthase"/>
    <property type="match status" value="1"/>
</dbReference>
<dbReference type="InterPro" id="IPR050071">
    <property type="entry name" value="Dehydroquinate_synthase"/>
</dbReference>
<dbReference type="InterPro" id="IPR016037">
    <property type="entry name" value="DHQ_synth_AroB"/>
</dbReference>
<dbReference type="InterPro" id="IPR030963">
    <property type="entry name" value="DHQ_synth_fam"/>
</dbReference>
<dbReference type="InterPro" id="IPR030960">
    <property type="entry name" value="DHQS/DOIS_N"/>
</dbReference>
<dbReference type="InterPro" id="IPR056179">
    <property type="entry name" value="DHQS_C"/>
</dbReference>
<dbReference type="NCBIfam" id="TIGR01357">
    <property type="entry name" value="aroB"/>
    <property type="match status" value="1"/>
</dbReference>
<dbReference type="PANTHER" id="PTHR43622">
    <property type="entry name" value="3-DEHYDROQUINATE SYNTHASE"/>
    <property type="match status" value="1"/>
</dbReference>
<dbReference type="PANTHER" id="PTHR43622:SF7">
    <property type="entry name" value="3-DEHYDROQUINATE SYNTHASE, CHLOROPLASTIC"/>
    <property type="match status" value="1"/>
</dbReference>
<dbReference type="Pfam" id="PF01761">
    <property type="entry name" value="DHQ_synthase"/>
    <property type="match status" value="1"/>
</dbReference>
<dbReference type="Pfam" id="PF24621">
    <property type="entry name" value="DHQS_C"/>
    <property type="match status" value="1"/>
</dbReference>
<dbReference type="PIRSF" id="PIRSF001455">
    <property type="entry name" value="DHQ_synth"/>
    <property type="match status" value="1"/>
</dbReference>
<dbReference type="SUPFAM" id="SSF56796">
    <property type="entry name" value="Dehydroquinate synthase-like"/>
    <property type="match status" value="1"/>
</dbReference>
<accession>A4SK25</accession>
<evidence type="ECO:0000255" key="1">
    <source>
        <dbReference type="HAMAP-Rule" id="MF_00110"/>
    </source>
</evidence>
<organism>
    <name type="scientific">Aeromonas salmonicida (strain A449)</name>
    <dbReference type="NCBI Taxonomy" id="382245"/>
    <lineage>
        <taxon>Bacteria</taxon>
        <taxon>Pseudomonadati</taxon>
        <taxon>Pseudomonadota</taxon>
        <taxon>Gammaproteobacteria</taxon>
        <taxon>Aeromonadales</taxon>
        <taxon>Aeromonadaceae</taxon>
        <taxon>Aeromonas</taxon>
    </lineage>
</organism>
<gene>
    <name evidence="1" type="primary">aroB</name>
    <name type="ordered locus">ASA_1126</name>
</gene>
<sequence length="359" mass="39159">MERLKVELGERSYPIEIAAGLLQHAEVLTQTIKGKRVMIVTNTVVAPLYLERIIQLLSGFQVEHLILPDGEAYKTLATFERIMSALLETNHGRDTTLIALGGGVIGDVVGFAAASYQRGIPFIQVPTTLLSQVDSSVGGKTAVNHPLGKNMIGAFYQPKHVVIDTECLKTLPAREFAAGMAEVIKYGIIWDAEFFSWLETNMSRLQALEPAALAYAIRRCCEIKADVVTQDETEHGVRALLNLGHTFGHAIEAEKGYGNWLHGEAVAAGMMMAASTAEARGDLDARQLARIRDLLLAANLPIQAPADMDFSAFIRHMRRDKKVLEGKLRLVLPVGIGHAQVVADVSDDELLAVIESGRE</sequence>
<comment type="function">
    <text evidence="1">Catalyzes the conversion of 3-deoxy-D-arabino-heptulosonate 7-phosphate (DAHP) to dehydroquinate (DHQ).</text>
</comment>
<comment type="catalytic activity">
    <reaction evidence="1">
        <text>7-phospho-2-dehydro-3-deoxy-D-arabino-heptonate = 3-dehydroquinate + phosphate</text>
        <dbReference type="Rhea" id="RHEA:21968"/>
        <dbReference type="ChEBI" id="CHEBI:32364"/>
        <dbReference type="ChEBI" id="CHEBI:43474"/>
        <dbReference type="ChEBI" id="CHEBI:58394"/>
        <dbReference type="EC" id="4.2.3.4"/>
    </reaction>
</comment>
<comment type="cofactor">
    <cofactor evidence="1">
        <name>Co(2+)</name>
        <dbReference type="ChEBI" id="CHEBI:48828"/>
    </cofactor>
    <cofactor evidence="1">
        <name>Zn(2+)</name>
        <dbReference type="ChEBI" id="CHEBI:29105"/>
    </cofactor>
    <text evidence="1">Binds 1 divalent metal cation per subunit. Can use either Co(2+) or Zn(2+).</text>
</comment>
<comment type="cofactor">
    <cofactor evidence="1">
        <name>NAD(+)</name>
        <dbReference type="ChEBI" id="CHEBI:57540"/>
    </cofactor>
</comment>
<comment type="pathway">
    <text evidence="1">Metabolic intermediate biosynthesis; chorismate biosynthesis; chorismate from D-erythrose 4-phosphate and phosphoenolpyruvate: step 2/7.</text>
</comment>
<comment type="subcellular location">
    <subcellularLocation>
        <location evidence="1">Cytoplasm</location>
    </subcellularLocation>
</comment>
<comment type="similarity">
    <text evidence="1">Belongs to the sugar phosphate cyclases superfamily. Dehydroquinate synthase family.</text>
</comment>
<protein>
    <recommendedName>
        <fullName evidence="1">3-dehydroquinate synthase</fullName>
        <shortName evidence="1">DHQS</shortName>
        <ecNumber evidence="1">4.2.3.4</ecNumber>
    </recommendedName>
</protein>
<reference key="1">
    <citation type="journal article" date="2008" name="BMC Genomics">
        <title>The genome of Aeromonas salmonicida subsp. salmonicida A449: insights into the evolution of a fish pathogen.</title>
        <authorList>
            <person name="Reith M.E."/>
            <person name="Singh R.K."/>
            <person name="Curtis B."/>
            <person name="Boyd J.M."/>
            <person name="Bouevitch A."/>
            <person name="Kimball J."/>
            <person name="Munholland J."/>
            <person name="Murphy C."/>
            <person name="Sarty D."/>
            <person name="Williams J."/>
            <person name="Nash J.H."/>
            <person name="Johnson S.C."/>
            <person name="Brown L.L."/>
        </authorList>
    </citation>
    <scope>NUCLEOTIDE SEQUENCE [LARGE SCALE GENOMIC DNA]</scope>
    <source>
        <strain>A449</strain>
    </source>
</reference>
<proteinExistence type="inferred from homology"/>
<keyword id="KW-0028">Amino-acid biosynthesis</keyword>
<keyword id="KW-0057">Aromatic amino acid biosynthesis</keyword>
<keyword id="KW-0170">Cobalt</keyword>
<keyword id="KW-0963">Cytoplasm</keyword>
<keyword id="KW-0456">Lyase</keyword>
<keyword id="KW-0479">Metal-binding</keyword>
<keyword id="KW-0520">NAD</keyword>
<keyword id="KW-0547">Nucleotide-binding</keyword>
<keyword id="KW-0862">Zinc</keyword>
<name>AROB_AERS4</name>
<feature type="chain" id="PRO_1000094448" description="3-dehydroquinate synthase">
    <location>
        <begin position="1"/>
        <end position="359"/>
    </location>
</feature>
<feature type="binding site" evidence="1">
    <location>
        <begin position="69"/>
        <end position="74"/>
    </location>
    <ligand>
        <name>NAD(+)</name>
        <dbReference type="ChEBI" id="CHEBI:57540"/>
    </ligand>
</feature>
<feature type="binding site" evidence="1">
    <location>
        <begin position="103"/>
        <end position="107"/>
    </location>
    <ligand>
        <name>NAD(+)</name>
        <dbReference type="ChEBI" id="CHEBI:57540"/>
    </ligand>
</feature>
<feature type="binding site" evidence="1">
    <location>
        <begin position="127"/>
        <end position="128"/>
    </location>
    <ligand>
        <name>NAD(+)</name>
        <dbReference type="ChEBI" id="CHEBI:57540"/>
    </ligand>
</feature>
<feature type="binding site" evidence="1">
    <location>
        <position position="140"/>
    </location>
    <ligand>
        <name>NAD(+)</name>
        <dbReference type="ChEBI" id="CHEBI:57540"/>
    </ligand>
</feature>
<feature type="binding site" evidence="1">
    <location>
        <position position="149"/>
    </location>
    <ligand>
        <name>NAD(+)</name>
        <dbReference type="ChEBI" id="CHEBI:57540"/>
    </ligand>
</feature>
<feature type="binding site" evidence="1">
    <location>
        <begin position="167"/>
        <end position="170"/>
    </location>
    <ligand>
        <name>NAD(+)</name>
        <dbReference type="ChEBI" id="CHEBI:57540"/>
    </ligand>
</feature>
<feature type="binding site" evidence="1">
    <location>
        <position position="182"/>
    </location>
    <ligand>
        <name>Zn(2+)</name>
        <dbReference type="ChEBI" id="CHEBI:29105"/>
    </ligand>
</feature>
<feature type="binding site" evidence="1">
    <location>
        <position position="245"/>
    </location>
    <ligand>
        <name>Zn(2+)</name>
        <dbReference type="ChEBI" id="CHEBI:29105"/>
    </ligand>
</feature>
<feature type="binding site" evidence="1">
    <location>
        <position position="262"/>
    </location>
    <ligand>
        <name>Zn(2+)</name>
        <dbReference type="ChEBI" id="CHEBI:29105"/>
    </ligand>
</feature>